<keyword id="KW-0560">Oxidoreductase</keyword>
<keyword id="KW-1185">Reference proteome</keyword>
<accession>Q5YUS0</accession>
<feature type="chain" id="PRO_1000145424" description="Peptide methionine sulfoxide reductase MsrA">
    <location>
        <begin position="1"/>
        <end position="170"/>
    </location>
</feature>
<feature type="active site" evidence="1">
    <location>
        <position position="13"/>
    </location>
</feature>
<comment type="function">
    <text evidence="1">Has an important function as a repair enzyme for proteins that have been inactivated by oxidation. Catalyzes the reversible oxidation-reduction of methionine sulfoxide in proteins to methionine.</text>
</comment>
<comment type="catalytic activity">
    <reaction evidence="1">
        <text>L-methionyl-[protein] + [thioredoxin]-disulfide + H2O = L-methionyl-(S)-S-oxide-[protein] + [thioredoxin]-dithiol</text>
        <dbReference type="Rhea" id="RHEA:14217"/>
        <dbReference type="Rhea" id="RHEA-COMP:10698"/>
        <dbReference type="Rhea" id="RHEA-COMP:10700"/>
        <dbReference type="Rhea" id="RHEA-COMP:12313"/>
        <dbReference type="Rhea" id="RHEA-COMP:12315"/>
        <dbReference type="ChEBI" id="CHEBI:15377"/>
        <dbReference type="ChEBI" id="CHEBI:16044"/>
        <dbReference type="ChEBI" id="CHEBI:29950"/>
        <dbReference type="ChEBI" id="CHEBI:44120"/>
        <dbReference type="ChEBI" id="CHEBI:50058"/>
        <dbReference type="EC" id="1.8.4.11"/>
    </reaction>
</comment>
<comment type="catalytic activity">
    <reaction evidence="1">
        <text>[thioredoxin]-disulfide + L-methionine + H2O = L-methionine (S)-S-oxide + [thioredoxin]-dithiol</text>
        <dbReference type="Rhea" id="RHEA:19993"/>
        <dbReference type="Rhea" id="RHEA-COMP:10698"/>
        <dbReference type="Rhea" id="RHEA-COMP:10700"/>
        <dbReference type="ChEBI" id="CHEBI:15377"/>
        <dbReference type="ChEBI" id="CHEBI:29950"/>
        <dbReference type="ChEBI" id="CHEBI:50058"/>
        <dbReference type="ChEBI" id="CHEBI:57844"/>
        <dbReference type="ChEBI" id="CHEBI:58772"/>
        <dbReference type="EC" id="1.8.4.11"/>
    </reaction>
</comment>
<comment type="similarity">
    <text evidence="1">Belongs to the MsrA Met sulfoxide reductase family.</text>
</comment>
<protein>
    <recommendedName>
        <fullName evidence="1">Peptide methionine sulfoxide reductase MsrA</fullName>
        <shortName evidence="1">Protein-methionine-S-oxide reductase</shortName>
        <ecNumber evidence="1">1.8.4.11</ecNumber>
    </recommendedName>
    <alternativeName>
        <fullName evidence="1">Peptide-methionine (S)-S-oxide reductase</fullName>
        <shortName evidence="1">Peptide Met(O) reductase</shortName>
    </alternativeName>
</protein>
<organism>
    <name type="scientific">Nocardia farcinica (strain IFM 10152)</name>
    <dbReference type="NCBI Taxonomy" id="247156"/>
    <lineage>
        <taxon>Bacteria</taxon>
        <taxon>Bacillati</taxon>
        <taxon>Actinomycetota</taxon>
        <taxon>Actinomycetes</taxon>
        <taxon>Mycobacteriales</taxon>
        <taxon>Nocardiaceae</taxon>
        <taxon>Nocardia</taxon>
    </lineage>
</organism>
<name>MSRA_NOCFA</name>
<gene>
    <name evidence="1" type="primary">msrA</name>
    <name type="ordered locus">NFA_32240</name>
</gene>
<proteinExistence type="inferred from homology"/>
<dbReference type="EC" id="1.8.4.11" evidence="1"/>
<dbReference type="EMBL" id="AP006618">
    <property type="protein sequence ID" value="BAD58071.1"/>
    <property type="molecule type" value="Genomic_DNA"/>
</dbReference>
<dbReference type="RefSeq" id="WP_011209756.1">
    <property type="nucleotide sequence ID" value="NC_006361.1"/>
</dbReference>
<dbReference type="SMR" id="Q5YUS0"/>
<dbReference type="STRING" id="247156.NFA_32240"/>
<dbReference type="GeneID" id="61133940"/>
<dbReference type="KEGG" id="nfa:NFA_32240"/>
<dbReference type="eggNOG" id="COG0225">
    <property type="taxonomic scope" value="Bacteria"/>
</dbReference>
<dbReference type="HOGENOM" id="CLU_031040_10_2_11"/>
<dbReference type="OrthoDB" id="4174719at2"/>
<dbReference type="Proteomes" id="UP000006820">
    <property type="component" value="Chromosome"/>
</dbReference>
<dbReference type="GO" id="GO:0033744">
    <property type="term" value="F:L-methionine:thioredoxin-disulfide S-oxidoreductase activity"/>
    <property type="evidence" value="ECO:0007669"/>
    <property type="project" value="RHEA"/>
</dbReference>
<dbReference type="GO" id="GO:0008113">
    <property type="term" value="F:peptide-methionine (S)-S-oxide reductase activity"/>
    <property type="evidence" value="ECO:0007669"/>
    <property type="project" value="UniProtKB-UniRule"/>
</dbReference>
<dbReference type="GO" id="GO:0036211">
    <property type="term" value="P:protein modification process"/>
    <property type="evidence" value="ECO:0007669"/>
    <property type="project" value="UniProtKB-UniRule"/>
</dbReference>
<dbReference type="FunFam" id="3.30.1060.10:FF:000005">
    <property type="entry name" value="Peptide methionine sulfoxide reductase MsrA"/>
    <property type="match status" value="1"/>
</dbReference>
<dbReference type="Gene3D" id="3.30.1060.10">
    <property type="entry name" value="Peptide methionine sulphoxide reductase MsrA"/>
    <property type="match status" value="1"/>
</dbReference>
<dbReference type="HAMAP" id="MF_01401">
    <property type="entry name" value="MsrA"/>
    <property type="match status" value="1"/>
</dbReference>
<dbReference type="InterPro" id="IPR002569">
    <property type="entry name" value="Met_Sox_Rdtase_MsrA_dom"/>
</dbReference>
<dbReference type="InterPro" id="IPR036509">
    <property type="entry name" value="Met_Sox_Rdtase_MsrA_sf"/>
</dbReference>
<dbReference type="NCBIfam" id="TIGR00401">
    <property type="entry name" value="msrA"/>
    <property type="match status" value="1"/>
</dbReference>
<dbReference type="PANTHER" id="PTHR43774">
    <property type="entry name" value="PEPTIDE METHIONINE SULFOXIDE REDUCTASE"/>
    <property type="match status" value="1"/>
</dbReference>
<dbReference type="PANTHER" id="PTHR43774:SF1">
    <property type="entry name" value="PEPTIDE METHIONINE SULFOXIDE REDUCTASE MSRA 2"/>
    <property type="match status" value="1"/>
</dbReference>
<dbReference type="Pfam" id="PF01625">
    <property type="entry name" value="PMSR"/>
    <property type="match status" value="1"/>
</dbReference>
<dbReference type="SUPFAM" id="SSF55068">
    <property type="entry name" value="Peptide methionine sulfoxide reductase"/>
    <property type="match status" value="1"/>
</dbReference>
<evidence type="ECO:0000255" key="1">
    <source>
        <dbReference type="HAMAP-Rule" id="MF_01401"/>
    </source>
</evidence>
<sequence>MTDTRRAILAGGCFWGMQDLIRRQPGVVSTRVGYTGGTNDHPTYRNHPGHAEAVEIVYDPERTDYRALLEFFFQIHDPTTKDRQGNDIGTSYRSAIFYLDDEQRRVAEDTIADVDASGLWPGKVVTEVTPASEFWEAEPEHQDYLLRYPNGYTCHYPRPDWKLPKRQATA</sequence>
<reference key="1">
    <citation type="journal article" date="2004" name="Proc. Natl. Acad. Sci. U.S.A.">
        <title>The complete genomic sequence of Nocardia farcinica IFM 10152.</title>
        <authorList>
            <person name="Ishikawa J."/>
            <person name="Yamashita A."/>
            <person name="Mikami Y."/>
            <person name="Hoshino Y."/>
            <person name="Kurita H."/>
            <person name="Hotta K."/>
            <person name="Shiba T."/>
            <person name="Hattori M."/>
        </authorList>
    </citation>
    <scope>NUCLEOTIDE SEQUENCE [LARGE SCALE GENOMIC DNA]</scope>
    <source>
        <strain>IFM 10152</strain>
    </source>
</reference>